<proteinExistence type="evidence at protein level"/>
<accession>P03997</accession>
<sequence length="175" mass="19765">ADTNAPLCLCDEPGILGRNQLVTPEVKEKIEKAVEAVAEESGVSGRGFSLFSHHPVFRECGKYECRTVRPEHTRCYNFPPFVHFTSECPVSTRDCEPVFGYTVAGEFRVIVQAPRAGFRQCVWQHKCRYGSNNCGFSGRCTQQRSVVRLVTYNLEKDGFLCESFRTCCGCPCRNY</sequence>
<name>COAG_CARRO</name>
<feature type="chain" id="PRO_0000020953" description="Coagulin chain A">
    <location>
        <begin position="1"/>
        <end position="18"/>
    </location>
</feature>
<feature type="peptide" id="PRO_0000020954" description="Peptide C">
    <location>
        <begin position="19"/>
        <end position="46"/>
    </location>
</feature>
<feature type="chain" id="PRO_0000020955" description="Coagulin chain B">
    <location>
        <begin position="47"/>
        <end position="175"/>
    </location>
</feature>
<feature type="disulfide bond" description="Interchain (between A and B chains)" evidence="1">
    <location>
        <begin position="8"/>
        <end position="167"/>
    </location>
</feature>
<feature type="disulfide bond" description="Interchain (between A and B chains)" evidence="1">
    <location>
        <begin position="10"/>
        <end position="95"/>
    </location>
</feature>
<feature type="disulfide bond" evidence="1">
    <location>
        <begin position="60"/>
        <end position="161"/>
    </location>
</feature>
<feature type="disulfide bond" evidence="1">
    <location>
        <begin position="65"/>
        <end position="121"/>
    </location>
</feature>
<feature type="disulfide bond" evidence="1">
    <location>
        <begin position="75"/>
        <end position="168"/>
    </location>
</feature>
<feature type="disulfide bond" evidence="1">
    <location>
        <begin position="88"/>
        <end position="140"/>
    </location>
</feature>
<feature type="disulfide bond" evidence="1">
    <location>
        <begin position="127"/>
        <end position="170"/>
    </location>
</feature>
<feature type="disulfide bond" evidence="1">
    <location>
        <begin position="134"/>
        <end position="172"/>
    </location>
</feature>
<evidence type="ECO:0000250" key="1"/>
<evidence type="ECO:0000305" key="2"/>
<keyword id="KW-0903">Direct protein sequencing</keyword>
<keyword id="KW-1015">Disulfide bond</keyword>
<keyword id="KW-0353">Hemolymph clotting</keyword>
<keyword id="KW-0964">Secreted</keyword>
<protein>
    <recommendedName>
        <fullName>Coagulogen</fullName>
    </recommendedName>
    <component>
        <recommendedName>
            <fullName>Coagulin chain A</fullName>
        </recommendedName>
    </component>
    <component>
        <recommendedName>
            <fullName>Peptide C</fullName>
        </recommendedName>
    </component>
    <component>
        <recommendedName>
            <fullName>Coagulin chain B</fullName>
        </recommendedName>
    </component>
</protein>
<comment type="function">
    <text>Coagulogen is a gel-forming protein of hemolymph; it hinders the spread of invaders by immobilizing them.</text>
</comment>
<comment type="subunit">
    <text>Coagulogen is cleaved after Arg-18 and Arg-46 by a clotting enzyme contained in the hemocyte and activated by a bacterial endotoxin (lipopolysaccharide). This cleavage releases the peptide C and leaves 2 chains of coagulin, A and B, linked by two disulfide bonds. Coagulin molecules interlink to form a gel.</text>
</comment>
<comment type="subcellular location">
    <subcellularLocation>
        <location>Secreted</location>
    </subcellularLocation>
</comment>
<comment type="tissue specificity">
    <text>Hemolymph.</text>
</comment>
<comment type="similarity">
    <text evidence="2">Belongs to the coagulin family.</text>
</comment>
<organism>
    <name type="scientific">Carcinoscorpius rotundicauda</name>
    <name type="common">Mangrove horseshoe crab</name>
    <name type="synonym">Limulus rotundicauda</name>
    <dbReference type="NCBI Taxonomy" id="6848"/>
    <lineage>
        <taxon>Eukaryota</taxon>
        <taxon>Metazoa</taxon>
        <taxon>Ecdysozoa</taxon>
        <taxon>Arthropoda</taxon>
        <taxon>Chelicerata</taxon>
        <taxon>Merostomata</taxon>
        <taxon>Xiphosura</taxon>
        <taxon>Limulidae</taxon>
        <taxon>Carcinoscorpius</taxon>
    </lineage>
</organism>
<dbReference type="PIR" id="A03131">
    <property type="entry name" value="WCHCS"/>
</dbReference>
<dbReference type="SMR" id="P03997"/>
<dbReference type="GO" id="GO:0005576">
    <property type="term" value="C:extracellular region"/>
    <property type="evidence" value="ECO:0007669"/>
    <property type="project" value="UniProtKB-SubCell"/>
</dbReference>
<dbReference type="GO" id="GO:0042381">
    <property type="term" value="P:hemolymph coagulation"/>
    <property type="evidence" value="ECO:0007669"/>
    <property type="project" value="UniProtKB-KW"/>
</dbReference>
<dbReference type="Gene3D" id="2.10.90.10">
    <property type="entry name" value="Cystine-knot cytokines"/>
    <property type="match status" value="1"/>
</dbReference>
<dbReference type="InterPro" id="IPR000275">
    <property type="entry name" value="Coagulin"/>
</dbReference>
<dbReference type="InterPro" id="IPR029034">
    <property type="entry name" value="Cystine-knot_cytokine"/>
</dbReference>
<dbReference type="Pfam" id="PF02035">
    <property type="entry name" value="Coagulin"/>
    <property type="match status" value="1"/>
</dbReference>
<dbReference type="PIRSF" id="PIRSF002379">
    <property type="entry name" value="Coagulogen"/>
    <property type="match status" value="1"/>
</dbReference>
<dbReference type="PRINTS" id="PR00763">
    <property type="entry name" value="COAGULIN"/>
</dbReference>
<dbReference type="SUPFAM" id="SSF57501">
    <property type="entry name" value="Cystine-knot cytokines"/>
    <property type="match status" value="1"/>
</dbReference>
<reference key="1">
    <citation type="journal article" date="1985" name="J. Biochem.">
        <title>The complete amino acid sequence of coagulogen isolated from Southeast Asian horseshoe crab, Carcinoscorpius rotundicauda.</title>
        <authorList>
            <person name="Srimal S."/>
            <person name="Miyata T."/>
            <person name="Kawabata S."/>
            <person name="Miyata T."/>
            <person name="Iwanaga S."/>
        </authorList>
    </citation>
    <scope>PROTEIN SEQUENCE</scope>
</reference>